<feature type="chain" id="PRO_0000454276" description="Domoic acid biosynthesis cluster protein B">
    <location>
        <begin position="1"/>
        <end position="249"/>
    </location>
</feature>
<accession>A0A386L1Q6</accession>
<proteinExistence type="evidence at transcript level"/>
<dbReference type="EMBL" id="MH202990">
    <property type="protein sequence ID" value="AYD91072.1"/>
    <property type="molecule type" value="Genomic_DNA"/>
</dbReference>
<dbReference type="GO" id="GO:0071244">
    <property type="term" value="P:cellular response to carbon dioxide"/>
    <property type="evidence" value="ECO:0000270"/>
    <property type="project" value="UniProtKB"/>
</dbReference>
<dbReference type="GO" id="GO:0016036">
    <property type="term" value="P:cellular response to phosphate starvation"/>
    <property type="evidence" value="ECO:0000270"/>
    <property type="project" value="UniProtKB"/>
</dbReference>
<comment type="function">
    <text evidence="3">Unknown function: part of the gene cluster that mediates the biosynthesis of domoic acid (DA) and derivatives, natural products with neurochemical activity acting as ionotropic glutamate receptor (iGluR) agonists, thus being neurotoxins causing amnesic shellfish poisoning (ASP).</text>
</comment>
<comment type="induction">
    <text evidence="1">Up-regulated under phosphate limitation and by increasing partial pressure of CO(2).</text>
</comment>
<sequence length="249" mass="28002">MMAGRKGYQSVMDENCHDKTESAYTDDRSLNGSSGSSCLKNNVIAFFLGAAVVAATQYVSIDSSLTKAVEVTSFTTSDAPAIDIAINPTRPSLDARQDFKIEGWGNQTRNDGWPSFHFEVFHFCPHLINFMYENQVHPQSRVDPSNVIYDAQHPGALAEDGFAEVLQQTLPKFYDYPVGYRLNDRPAEISAYWTLHMRIARGSEDSQWHDFASSLPEGINRIYVKKPLQWNGDHVTLFSSQTGYNILVY</sequence>
<protein>
    <recommendedName>
        <fullName evidence="2">Domoic acid biosynthesis cluster protein B</fullName>
        <shortName evidence="2">PmDabB</shortName>
    </recommendedName>
</protein>
<evidence type="ECO:0000269" key="1">
    <source>
    </source>
</evidence>
<evidence type="ECO:0000303" key="2">
    <source>
    </source>
</evidence>
<evidence type="ECO:0000305" key="3">
    <source>
    </source>
</evidence>
<reference key="1">
    <citation type="journal article" date="2018" name="Science">
        <title>Biosynthesis of the neurotoxin domoic acid in a bloom-forming diatom.</title>
        <authorList>
            <person name="Brunson J.K."/>
            <person name="McKinnie S.M.K."/>
            <person name="Chekan J.R."/>
            <person name="McCrow J.P."/>
            <person name="Miles Z.D."/>
            <person name="Bertrand E.M."/>
            <person name="Bielinski V.A."/>
            <person name="Luhavaya H."/>
            <person name="Obornik M."/>
            <person name="Smith G.J."/>
            <person name="Hutchins D.A."/>
            <person name="Allen A.E."/>
            <person name="Moore B.S."/>
        </authorList>
    </citation>
    <scope>NUCLEOTIDE SEQUENCE [GENOMIC DNA]</scope>
    <scope>FUNCTION</scope>
    <scope>INDUCTION BY PHOSPHATE LIMITATION AND CO(2)</scope>
    <source>
        <strain>15091C3</strain>
    </source>
</reference>
<name>DABB_PSEMU</name>
<organism>
    <name type="scientific">Pseudo-nitzschia multiseries</name>
    <name type="common">Marine planktonic diatom</name>
    <name type="synonym">Nitzschia pungens f. multiseries</name>
    <dbReference type="NCBI Taxonomy" id="37319"/>
    <lineage>
        <taxon>Eukaryota</taxon>
        <taxon>Sar</taxon>
        <taxon>Stramenopiles</taxon>
        <taxon>Ochrophyta</taxon>
        <taxon>Bacillariophyta</taxon>
        <taxon>Bacillariophyceae</taxon>
        <taxon>Bacillariophycidae</taxon>
        <taxon>Bacillariales</taxon>
        <taxon>Bacillariaceae</taxon>
        <taxon>Pseudo-nitzschia</taxon>
    </lineage>
</organism>
<gene>
    <name evidence="2" type="primary">dabB</name>
</gene>